<organismHost>
    <name type="scientific">Sus scrofa</name>
    <name type="common">Pig</name>
    <dbReference type="NCBI Taxonomy" id="9823"/>
</organismHost>
<organism>
    <name type="scientific">Suid herpesvirus 1 (strain Kaplan)</name>
    <name type="common">SuHV-1</name>
    <name type="synonym">Pseudorabies virus (strain Kaplan)</name>
    <dbReference type="NCBI Taxonomy" id="33703"/>
    <lineage>
        <taxon>Viruses</taxon>
        <taxon>Duplodnaviria</taxon>
        <taxon>Heunggongvirae</taxon>
        <taxon>Peploviricota</taxon>
        <taxon>Herviviricetes</taxon>
        <taxon>Herpesvirales</taxon>
        <taxon>Orthoherpesviridae</taxon>
        <taxon>Alphaherpesvirinae</taxon>
        <taxon>Varicellovirus</taxon>
        <taxon>Varicellovirus suidalpha1</taxon>
        <taxon>Suid herpesvirus 1</taxon>
    </lineage>
</organism>
<reference key="1">
    <citation type="journal article" date="1993" name="Virology">
        <title>The pseudorabies virus host-shutoff homolog gene: nucleotide sequence and comparison with alphaherpesvirus protein counterparts.</title>
        <authorList>
            <person name="Berthomme H."/>
            <person name="Jacquemont B."/>
            <person name="Epstein A."/>
        </authorList>
    </citation>
    <scope>NUCLEOTIDE SEQUENCE [GENOMIC DNA]</scope>
</reference>
<accession>P36314</accession>
<feature type="chain" id="PRO_0000116060" description="Virion host shutoff protein">
    <location>
        <begin position="1"/>
        <end position="365"/>
    </location>
</feature>
<gene>
    <name type="primary">VHS</name>
</gene>
<proteinExistence type="inferred from homology"/>
<evidence type="ECO:0000250" key="1"/>
<evidence type="ECO:0000305" key="2"/>
<keyword id="KW-1132">Decay of host mRNAs by virus</keyword>
<keyword id="KW-0255">Endonuclease</keyword>
<keyword id="KW-1262">Eukaryotic host gene expression shutoff by virus</keyword>
<keyword id="KW-1190">Host gene expression shutoff by virus</keyword>
<keyword id="KW-1192">Host mRNA suppression by virus</keyword>
<keyword id="KW-0945">Host-virus interaction</keyword>
<keyword id="KW-0378">Hydrolase</keyword>
<keyword id="KW-0540">Nuclease</keyword>
<keyword id="KW-0694">RNA-binding</keyword>
<keyword id="KW-0946">Virion</keyword>
<comment type="function">
    <text evidence="1">Minor structural protein that acts as an endoribonuclease during lytic infection. Degrades host mRNAs in the cytoplasm by cutting them at preferred sites, including some in regions of translation initiation (By similarity).</text>
</comment>
<comment type="subcellular location">
    <subcellularLocation>
        <location evidence="2">Virion</location>
    </subcellularLocation>
</comment>
<comment type="similarity">
    <text evidence="2">Belongs to the herpesviridae VHS protein family.</text>
</comment>
<name>SHUT_SUHVK</name>
<protein>
    <recommendedName>
        <fullName>Virion host shutoff protein</fullName>
        <shortName>Vhs</shortName>
        <ecNumber>3.1.27.-</ecNumber>
    </recommendedName>
</protein>
<sequence>MGLFGLLKYAHRHRLVRSEAISTPPGVLTPIAIDLWNVMYTLMEKHYQETTEDNATTTARCLLRLLRMLHKRTYFPIFVSDRGIFGNGRIARGAKAIMAAAVRADGDGAADAPPRPRWSTMLHAPRIVHRLCVNLIRHMGYAYVDVSDMEADDVCANLYHTNTVAQVHTTDTDMILTGCDMILDIAPVFPLVLRCRDVLASLGVDYSEFLAAFVRCHTDLHRAPDVDSVQQVAESLEGREVAPEDVKLKYASRCPDIMRDAGKALALLPAAGDARSPRAEREFIQHVVAMLTPARHGHLSVLRRVPIVQEPSDVNKVFGSLLRHVKNETRAKELAGLFWKHIPPPPNYQAVLMAYWDDCNAHRRK</sequence>
<dbReference type="EC" id="3.1.27.-"/>
<dbReference type="EMBL" id="S57917">
    <property type="protein sequence ID" value="AAB25948.2"/>
    <property type="molecule type" value="Genomic_DNA"/>
</dbReference>
<dbReference type="PIR" id="A46117">
    <property type="entry name" value="A46117"/>
</dbReference>
<dbReference type="SMR" id="P36314"/>
<dbReference type="KEGG" id="vg:2952522"/>
<dbReference type="GO" id="GO:0044423">
    <property type="term" value="C:virion component"/>
    <property type="evidence" value="ECO:0007669"/>
    <property type="project" value="UniProtKB-KW"/>
</dbReference>
<dbReference type="GO" id="GO:0004519">
    <property type="term" value="F:endonuclease activity"/>
    <property type="evidence" value="ECO:0007669"/>
    <property type="project" value="UniProtKB-KW"/>
</dbReference>
<dbReference type="GO" id="GO:0003723">
    <property type="term" value="F:RNA binding"/>
    <property type="evidence" value="ECO:0007669"/>
    <property type="project" value="UniProtKB-KW"/>
</dbReference>
<dbReference type="GO" id="GO:0039595">
    <property type="term" value="P:symbiont-mediated degradation of host mRNA"/>
    <property type="evidence" value="ECO:0007669"/>
    <property type="project" value="UniProtKB-KW"/>
</dbReference>
<dbReference type="GO" id="GO:0039657">
    <property type="term" value="P:symbiont-mediated suppression of host gene expression"/>
    <property type="evidence" value="ECO:0007669"/>
    <property type="project" value="UniProtKB-KW"/>
</dbReference>
<dbReference type="Gene3D" id="3.40.50.1010">
    <property type="entry name" value="5'-nuclease"/>
    <property type="match status" value="1"/>
</dbReference>
<dbReference type="InterPro" id="IPR029060">
    <property type="entry name" value="PIN-like_dom_sf"/>
</dbReference>
<dbReference type="SUPFAM" id="SSF88723">
    <property type="entry name" value="PIN domain-like"/>
    <property type="match status" value="1"/>
</dbReference>